<comment type="function">
    <text evidence="1">Toxic component of a type II toxin-antitoxin (TA) system. An RNase. Its cognate antitoxin is VapB44 (By similarity).</text>
</comment>
<comment type="cofactor">
    <cofactor evidence="1">
        <name>Mg(2+)</name>
        <dbReference type="ChEBI" id="CHEBI:18420"/>
    </cofactor>
</comment>
<comment type="similarity">
    <text evidence="1">Belongs to the PINc/VapC protein family.</text>
</comment>
<gene>
    <name evidence="1" type="primary">vapC44</name>
    <name type="ordered locus">MT3421</name>
</gene>
<reference key="1">
    <citation type="journal article" date="2002" name="J. Bacteriol.">
        <title>Whole-genome comparison of Mycobacterium tuberculosis clinical and laboratory strains.</title>
        <authorList>
            <person name="Fleischmann R.D."/>
            <person name="Alland D."/>
            <person name="Eisen J.A."/>
            <person name="Carpenter L."/>
            <person name="White O."/>
            <person name="Peterson J.D."/>
            <person name="DeBoy R.T."/>
            <person name="Dodson R.J."/>
            <person name="Gwinn M.L."/>
            <person name="Haft D.H."/>
            <person name="Hickey E.K."/>
            <person name="Kolonay J.F."/>
            <person name="Nelson W.C."/>
            <person name="Umayam L.A."/>
            <person name="Ermolaeva M.D."/>
            <person name="Salzberg S.L."/>
            <person name="Delcher A."/>
            <person name="Utterback T.R."/>
            <person name="Weidman J.F."/>
            <person name="Khouri H.M."/>
            <person name="Gill J."/>
            <person name="Mikula A."/>
            <person name="Bishai W."/>
            <person name="Jacobs W.R. Jr."/>
            <person name="Venter J.C."/>
            <person name="Fraser C.M."/>
        </authorList>
    </citation>
    <scope>NUCLEOTIDE SEQUENCE [LARGE SCALE GENOMIC DNA]</scope>
    <source>
        <strain>CDC 1551 / Oshkosh</strain>
    </source>
</reference>
<organism>
    <name type="scientific">Mycobacterium tuberculosis (strain CDC 1551 / Oshkosh)</name>
    <dbReference type="NCBI Taxonomy" id="83331"/>
    <lineage>
        <taxon>Bacteria</taxon>
        <taxon>Bacillati</taxon>
        <taxon>Actinomycetota</taxon>
        <taxon>Actinomycetes</taxon>
        <taxon>Mycobacteriales</taxon>
        <taxon>Mycobacteriaceae</taxon>
        <taxon>Mycobacterium</taxon>
        <taxon>Mycobacterium tuberculosis complex</taxon>
    </lineage>
</organism>
<evidence type="ECO:0000255" key="1">
    <source>
        <dbReference type="HAMAP-Rule" id="MF_00265"/>
    </source>
</evidence>
<sequence>MRALLDVNVLLALLDRDHVDHERARAWITGQIERGWASCAITQNGFVRVISQPRYPSPISVAHAIDLLARATHTRYHEFWSCTVSILDSKVIDRSRLHSPKQVTDAYLLALAVAHDGRFVTFDQSIALTAVPGATKQHLATL</sequence>
<name>VPC44_MYCTO</name>
<feature type="chain" id="PRO_0000428599" description="Ribonuclease VapC44">
    <location>
        <begin position="1"/>
        <end position="142"/>
    </location>
</feature>
<feature type="domain" description="PINc" evidence="1">
    <location>
        <begin position="4"/>
        <end position="126"/>
    </location>
</feature>
<feature type="binding site" evidence="1">
    <location>
        <position position="6"/>
    </location>
    <ligand>
        <name>Mg(2+)</name>
        <dbReference type="ChEBI" id="CHEBI:18420"/>
    </ligand>
</feature>
<feature type="binding site" evidence="1">
    <location>
        <position position="105"/>
    </location>
    <ligand>
        <name>Mg(2+)</name>
        <dbReference type="ChEBI" id="CHEBI:18420"/>
    </ligand>
</feature>
<protein>
    <recommendedName>
        <fullName evidence="1">Ribonuclease VapC44</fullName>
        <shortName evidence="1">RNase VapC44</shortName>
        <ecNumber evidence="1">3.1.-.-</ecNumber>
    </recommendedName>
    <alternativeName>
        <fullName evidence="1">Toxin VapC44</fullName>
    </alternativeName>
</protein>
<proteinExistence type="inferred from homology"/>
<accession>P9WF52</accession>
<accession>L0TEZ7</accession>
<accession>O53372</accession>
<accession>Q7D5Q0</accession>
<keyword id="KW-0378">Hydrolase</keyword>
<keyword id="KW-0460">Magnesium</keyword>
<keyword id="KW-0479">Metal-binding</keyword>
<keyword id="KW-0540">Nuclease</keyword>
<keyword id="KW-1185">Reference proteome</keyword>
<keyword id="KW-1277">Toxin-antitoxin system</keyword>
<dbReference type="EC" id="3.1.-.-" evidence="1"/>
<dbReference type="EMBL" id="AE000516">
    <property type="protein sequence ID" value="AAK47763.1"/>
    <property type="molecule type" value="Genomic_DNA"/>
</dbReference>
<dbReference type="PIR" id="G70843">
    <property type="entry name" value="G70843"/>
</dbReference>
<dbReference type="RefSeq" id="WP_003417282.1">
    <property type="nucleotide sequence ID" value="NZ_KK341227.1"/>
</dbReference>
<dbReference type="SMR" id="P9WF52"/>
<dbReference type="KEGG" id="mtc:MT3421"/>
<dbReference type="PATRIC" id="fig|83331.31.peg.3680"/>
<dbReference type="HOGENOM" id="CLU_145365_0_0_11"/>
<dbReference type="Proteomes" id="UP000001020">
    <property type="component" value="Chromosome"/>
</dbReference>
<dbReference type="GO" id="GO:0000287">
    <property type="term" value="F:magnesium ion binding"/>
    <property type="evidence" value="ECO:0007669"/>
    <property type="project" value="UniProtKB-UniRule"/>
</dbReference>
<dbReference type="GO" id="GO:0004540">
    <property type="term" value="F:RNA nuclease activity"/>
    <property type="evidence" value="ECO:0007669"/>
    <property type="project" value="InterPro"/>
</dbReference>
<dbReference type="GO" id="GO:0045926">
    <property type="term" value="P:negative regulation of growth"/>
    <property type="evidence" value="ECO:0007669"/>
    <property type="project" value="UniProtKB-ARBA"/>
</dbReference>
<dbReference type="Gene3D" id="3.40.50.1010">
    <property type="entry name" value="5'-nuclease"/>
    <property type="match status" value="1"/>
</dbReference>
<dbReference type="HAMAP" id="MF_00265">
    <property type="entry name" value="VapC_Nob1"/>
    <property type="match status" value="1"/>
</dbReference>
<dbReference type="InterPro" id="IPR006226">
    <property type="entry name" value="Mtu_PIN"/>
</dbReference>
<dbReference type="InterPro" id="IPR029060">
    <property type="entry name" value="PIN-like_dom_sf"/>
</dbReference>
<dbReference type="InterPro" id="IPR002716">
    <property type="entry name" value="PIN_dom"/>
</dbReference>
<dbReference type="InterPro" id="IPR022907">
    <property type="entry name" value="VapC_family"/>
</dbReference>
<dbReference type="NCBIfam" id="TIGR00028">
    <property type="entry name" value="Mtu_PIN_fam"/>
    <property type="match status" value="1"/>
</dbReference>
<dbReference type="Pfam" id="PF01850">
    <property type="entry name" value="PIN"/>
    <property type="match status" value="1"/>
</dbReference>
<dbReference type="SUPFAM" id="SSF88723">
    <property type="entry name" value="PIN domain-like"/>
    <property type="match status" value="1"/>
</dbReference>